<proteinExistence type="inferred from homology"/>
<name>NDPA_ENT38</name>
<feature type="chain" id="PRO_1000062109" description="Nucleoid-associated protein Ent638_2782">
    <location>
        <begin position="1"/>
        <end position="335"/>
    </location>
</feature>
<comment type="subcellular location">
    <subcellularLocation>
        <location evidence="1">Cytoplasm</location>
        <location evidence="1">Nucleoid</location>
    </subcellularLocation>
</comment>
<comment type="similarity">
    <text evidence="1">Belongs to the YejK family.</text>
</comment>
<reference key="1">
    <citation type="journal article" date="2010" name="PLoS Genet.">
        <title>Genome sequence of the plant growth promoting endophytic bacterium Enterobacter sp. 638.</title>
        <authorList>
            <person name="Taghavi S."/>
            <person name="van der Lelie D."/>
            <person name="Hoffman A."/>
            <person name="Zhang Y.B."/>
            <person name="Walla M.D."/>
            <person name="Vangronsveld J."/>
            <person name="Newman L."/>
            <person name="Monchy S."/>
        </authorList>
    </citation>
    <scope>NUCLEOTIDE SEQUENCE [LARGE SCALE GENOMIC DNA]</scope>
    <source>
        <strain>638</strain>
    </source>
</reference>
<accession>A4WCL7</accession>
<dbReference type="EMBL" id="CP000653">
    <property type="protein sequence ID" value="ABP61447.1"/>
    <property type="molecule type" value="Genomic_DNA"/>
</dbReference>
<dbReference type="RefSeq" id="WP_015959780.1">
    <property type="nucleotide sequence ID" value="NC_009436.1"/>
</dbReference>
<dbReference type="SMR" id="A4WCL7"/>
<dbReference type="STRING" id="399742.Ent638_2782"/>
<dbReference type="KEGG" id="ent:Ent638_2782"/>
<dbReference type="eggNOG" id="COG3081">
    <property type="taxonomic scope" value="Bacteria"/>
</dbReference>
<dbReference type="HOGENOM" id="CLU_063050_0_1_6"/>
<dbReference type="OrthoDB" id="9131762at2"/>
<dbReference type="Proteomes" id="UP000000230">
    <property type="component" value="Chromosome"/>
</dbReference>
<dbReference type="GO" id="GO:0043590">
    <property type="term" value="C:bacterial nucleoid"/>
    <property type="evidence" value="ECO:0007669"/>
    <property type="project" value="TreeGrafter"/>
</dbReference>
<dbReference type="GO" id="GO:0005737">
    <property type="term" value="C:cytoplasm"/>
    <property type="evidence" value="ECO:0007669"/>
    <property type="project" value="UniProtKB-UniRule"/>
</dbReference>
<dbReference type="GO" id="GO:0003690">
    <property type="term" value="F:double-stranded DNA binding"/>
    <property type="evidence" value="ECO:0007669"/>
    <property type="project" value="TreeGrafter"/>
</dbReference>
<dbReference type="GO" id="GO:0003727">
    <property type="term" value="F:single-stranded RNA binding"/>
    <property type="evidence" value="ECO:0007669"/>
    <property type="project" value="TreeGrafter"/>
</dbReference>
<dbReference type="HAMAP" id="MF_00730">
    <property type="entry name" value="NdpA"/>
    <property type="match status" value="1"/>
</dbReference>
<dbReference type="InterPro" id="IPR007358">
    <property type="entry name" value="Nucleoid_associated_NdpA"/>
</dbReference>
<dbReference type="NCBIfam" id="NF001557">
    <property type="entry name" value="PRK00378.1"/>
    <property type="match status" value="1"/>
</dbReference>
<dbReference type="PANTHER" id="PTHR38772">
    <property type="match status" value="1"/>
</dbReference>
<dbReference type="PANTHER" id="PTHR38772:SF1">
    <property type="entry name" value="NUCLEOID-ASSOCIATED PROTEIN YEJK"/>
    <property type="match status" value="1"/>
</dbReference>
<dbReference type="Pfam" id="PF04245">
    <property type="entry name" value="NA37"/>
    <property type="match status" value="1"/>
</dbReference>
<sequence>MSLDINQIALHQLIKRDEQTLELVLRDSLLEPTSTVTEMMAELHRVYSAKNKAYGMFNEESELAQSLRLQRQGEEDFLAFSRAATGRLRDELAKYPFADGGIVLFCQYRYLAVEYLLVTVLNNLSSMRVNEQLDISSTHYLDINHADIVARIDLTEWETNPESTRYLTFLKGRVGRKVSDFFMDFLGASEGLNAKAQNKGLLQALDDFTAEAQLDKSERQNVRQQVYSYCSEQLQAGEEIELESLSKELAGVSEVSFQEFTADKGYELEESFPADRSTLRQLTKFAGSGGGLTVNFDAMLLGERIFWDPATDTLTIKGTPPNLRDQLQRRTSGGK</sequence>
<organism>
    <name type="scientific">Enterobacter sp. (strain 638)</name>
    <dbReference type="NCBI Taxonomy" id="399742"/>
    <lineage>
        <taxon>Bacteria</taxon>
        <taxon>Pseudomonadati</taxon>
        <taxon>Pseudomonadota</taxon>
        <taxon>Gammaproteobacteria</taxon>
        <taxon>Enterobacterales</taxon>
        <taxon>Enterobacteriaceae</taxon>
        <taxon>Enterobacter</taxon>
    </lineage>
</organism>
<gene>
    <name type="ordered locus">Ent638_2782</name>
</gene>
<evidence type="ECO:0000255" key="1">
    <source>
        <dbReference type="HAMAP-Rule" id="MF_00730"/>
    </source>
</evidence>
<protein>
    <recommendedName>
        <fullName evidence="1">Nucleoid-associated protein Ent638_2782</fullName>
    </recommendedName>
</protein>
<keyword id="KW-0963">Cytoplasm</keyword>